<name>RPOC_VIBC3</name>
<proteinExistence type="inferred from homology"/>
<comment type="function">
    <text evidence="1">DNA-dependent RNA polymerase catalyzes the transcription of DNA into RNA using the four ribonucleoside triphosphates as substrates.</text>
</comment>
<comment type="catalytic activity">
    <reaction evidence="1">
        <text>RNA(n) + a ribonucleoside 5'-triphosphate = RNA(n+1) + diphosphate</text>
        <dbReference type="Rhea" id="RHEA:21248"/>
        <dbReference type="Rhea" id="RHEA-COMP:14527"/>
        <dbReference type="Rhea" id="RHEA-COMP:17342"/>
        <dbReference type="ChEBI" id="CHEBI:33019"/>
        <dbReference type="ChEBI" id="CHEBI:61557"/>
        <dbReference type="ChEBI" id="CHEBI:140395"/>
        <dbReference type="EC" id="2.7.7.6"/>
    </reaction>
</comment>
<comment type="cofactor">
    <cofactor evidence="1">
        <name>Mg(2+)</name>
        <dbReference type="ChEBI" id="CHEBI:18420"/>
    </cofactor>
    <text evidence="1">Binds 1 Mg(2+) ion per subunit.</text>
</comment>
<comment type="cofactor">
    <cofactor evidence="1">
        <name>Zn(2+)</name>
        <dbReference type="ChEBI" id="CHEBI:29105"/>
    </cofactor>
    <text evidence="1">Binds 2 Zn(2+) ions per subunit.</text>
</comment>
<comment type="subunit">
    <text evidence="1">The RNAP catalytic core consists of 2 alpha, 1 beta, 1 beta' and 1 omega subunit. When a sigma factor is associated with the core the holoenzyme is formed, which can initiate transcription.</text>
</comment>
<comment type="similarity">
    <text evidence="1">Belongs to the RNA polymerase beta' chain family.</text>
</comment>
<organism>
    <name type="scientific">Vibrio cholerae serotype O1 (strain ATCC 39541 / Classical Ogawa 395 / O395)</name>
    <dbReference type="NCBI Taxonomy" id="345073"/>
    <lineage>
        <taxon>Bacteria</taxon>
        <taxon>Pseudomonadati</taxon>
        <taxon>Pseudomonadota</taxon>
        <taxon>Gammaproteobacteria</taxon>
        <taxon>Vibrionales</taxon>
        <taxon>Vibrionaceae</taxon>
        <taxon>Vibrio</taxon>
    </lineage>
</organism>
<dbReference type="EC" id="2.7.7.6" evidence="1"/>
<dbReference type="EMBL" id="CP000627">
    <property type="protein sequence ID" value="ABQ21147.1"/>
    <property type="molecule type" value="Genomic_DNA"/>
</dbReference>
<dbReference type="EMBL" id="CP001235">
    <property type="protein sequence ID" value="ACP08395.1"/>
    <property type="molecule type" value="Genomic_DNA"/>
</dbReference>
<dbReference type="RefSeq" id="WP_000653994.1">
    <property type="nucleotide sequence ID" value="NZ_JAACZH010000036.1"/>
</dbReference>
<dbReference type="SMR" id="A5F3P6"/>
<dbReference type="GeneID" id="69720936"/>
<dbReference type="KEGG" id="vco:VC0395_A2731"/>
<dbReference type="KEGG" id="vcr:VC395_0372"/>
<dbReference type="PATRIC" id="fig|345073.21.peg.360"/>
<dbReference type="eggNOG" id="COG0086">
    <property type="taxonomic scope" value="Bacteria"/>
</dbReference>
<dbReference type="HOGENOM" id="CLU_000524_3_1_6"/>
<dbReference type="OrthoDB" id="9815296at2"/>
<dbReference type="Proteomes" id="UP000000249">
    <property type="component" value="Chromosome 2"/>
</dbReference>
<dbReference type="GO" id="GO:0000428">
    <property type="term" value="C:DNA-directed RNA polymerase complex"/>
    <property type="evidence" value="ECO:0007669"/>
    <property type="project" value="UniProtKB-KW"/>
</dbReference>
<dbReference type="GO" id="GO:0003677">
    <property type="term" value="F:DNA binding"/>
    <property type="evidence" value="ECO:0007669"/>
    <property type="project" value="UniProtKB-UniRule"/>
</dbReference>
<dbReference type="GO" id="GO:0003899">
    <property type="term" value="F:DNA-directed RNA polymerase activity"/>
    <property type="evidence" value="ECO:0007669"/>
    <property type="project" value="UniProtKB-UniRule"/>
</dbReference>
<dbReference type="GO" id="GO:0000287">
    <property type="term" value="F:magnesium ion binding"/>
    <property type="evidence" value="ECO:0007669"/>
    <property type="project" value="UniProtKB-UniRule"/>
</dbReference>
<dbReference type="GO" id="GO:0008270">
    <property type="term" value="F:zinc ion binding"/>
    <property type="evidence" value="ECO:0007669"/>
    <property type="project" value="UniProtKB-UniRule"/>
</dbReference>
<dbReference type="GO" id="GO:0006351">
    <property type="term" value="P:DNA-templated transcription"/>
    <property type="evidence" value="ECO:0007669"/>
    <property type="project" value="UniProtKB-UniRule"/>
</dbReference>
<dbReference type="CDD" id="cd02655">
    <property type="entry name" value="RNAP_beta'_C"/>
    <property type="match status" value="1"/>
</dbReference>
<dbReference type="CDD" id="cd01609">
    <property type="entry name" value="RNAP_beta'_N"/>
    <property type="match status" value="1"/>
</dbReference>
<dbReference type="FunFam" id="1.10.132.30:FF:000003">
    <property type="entry name" value="DNA-directed RNA polymerase subunit beta"/>
    <property type="match status" value="1"/>
</dbReference>
<dbReference type="FunFam" id="1.10.150.390:FF:000002">
    <property type="entry name" value="DNA-directed RNA polymerase subunit beta"/>
    <property type="match status" value="1"/>
</dbReference>
<dbReference type="FunFam" id="1.10.274.100:FF:000002">
    <property type="entry name" value="DNA-directed RNA polymerase subunit beta"/>
    <property type="match status" value="1"/>
</dbReference>
<dbReference type="FunFam" id="1.10.40.90:FF:000001">
    <property type="entry name" value="DNA-directed RNA polymerase subunit beta"/>
    <property type="match status" value="1"/>
</dbReference>
<dbReference type="FunFam" id="2.40.50.100:FF:000016">
    <property type="entry name" value="DNA-directed RNA polymerase subunit beta"/>
    <property type="match status" value="1"/>
</dbReference>
<dbReference type="FunFam" id="4.10.860.120:FF:000001">
    <property type="entry name" value="DNA-directed RNA polymerase subunit beta"/>
    <property type="match status" value="1"/>
</dbReference>
<dbReference type="Gene3D" id="1.10.132.30">
    <property type="match status" value="1"/>
</dbReference>
<dbReference type="Gene3D" id="1.10.150.390">
    <property type="match status" value="1"/>
</dbReference>
<dbReference type="Gene3D" id="1.10.1790.20">
    <property type="match status" value="1"/>
</dbReference>
<dbReference type="Gene3D" id="1.10.40.90">
    <property type="match status" value="1"/>
</dbReference>
<dbReference type="Gene3D" id="2.40.40.20">
    <property type="match status" value="1"/>
</dbReference>
<dbReference type="Gene3D" id="2.40.50.100">
    <property type="match status" value="3"/>
</dbReference>
<dbReference type="Gene3D" id="4.10.860.120">
    <property type="entry name" value="RNA polymerase II, clamp domain"/>
    <property type="match status" value="1"/>
</dbReference>
<dbReference type="Gene3D" id="1.10.274.100">
    <property type="entry name" value="RNA polymerase Rpb1, domain 3"/>
    <property type="match status" value="1"/>
</dbReference>
<dbReference type="HAMAP" id="MF_01322">
    <property type="entry name" value="RNApol_bact_RpoC"/>
    <property type="match status" value="1"/>
</dbReference>
<dbReference type="InterPro" id="IPR045867">
    <property type="entry name" value="DNA-dir_RpoC_beta_prime"/>
</dbReference>
<dbReference type="InterPro" id="IPR012754">
    <property type="entry name" value="DNA-dir_RpoC_beta_prime_bact"/>
</dbReference>
<dbReference type="InterPro" id="IPR000722">
    <property type="entry name" value="RNA_pol_asu"/>
</dbReference>
<dbReference type="InterPro" id="IPR006592">
    <property type="entry name" value="RNA_pol_N"/>
</dbReference>
<dbReference type="InterPro" id="IPR007080">
    <property type="entry name" value="RNA_pol_Rpb1_1"/>
</dbReference>
<dbReference type="InterPro" id="IPR007066">
    <property type="entry name" value="RNA_pol_Rpb1_3"/>
</dbReference>
<dbReference type="InterPro" id="IPR042102">
    <property type="entry name" value="RNA_pol_Rpb1_3_sf"/>
</dbReference>
<dbReference type="InterPro" id="IPR007083">
    <property type="entry name" value="RNA_pol_Rpb1_4"/>
</dbReference>
<dbReference type="InterPro" id="IPR007081">
    <property type="entry name" value="RNA_pol_Rpb1_5"/>
</dbReference>
<dbReference type="InterPro" id="IPR044893">
    <property type="entry name" value="RNA_pol_Rpb1_clamp_domain"/>
</dbReference>
<dbReference type="InterPro" id="IPR038120">
    <property type="entry name" value="Rpb1_funnel_sf"/>
</dbReference>
<dbReference type="NCBIfam" id="TIGR02386">
    <property type="entry name" value="rpoC_TIGR"/>
    <property type="match status" value="1"/>
</dbReference>
<dbReference type="PANTHER" id="PTHR19376">
    <property type="entry name" value="DNA-DIRECTED RNA POLYMERASE"/>
    <property type="match status" value="1"/>
</dbReference>
<dbReference type="PANTHER" id="PTHR19376:SF54">
    <property type="entry name" value="DNA-DIRECTED RNA POLYMERASE SUBUNIT BETA"/>
    <property type="match status" value="1"/>
</dbReference>
<dbReference type="Pfam" id="PF04997">
    <property type="entry name" value="RNA_pol_Rpb1_1"/>
    <property type="match status" value="1"/>
</dbReference>
<dbReference type="Pfam" id="PF00623">
    <property type="entry name" value="RNA_pol_Rpb1_2"/>
    <property type="match status" value="2"/>
</dbReference>
<dbReference type="Pfam" id="PF04983">
    <property type="entry name" value="RNA_pol_Rpb1_3"/>
    <property type="match status" value="1"/>
</dbReference>
<dbReference type="Pfam" id="PF05000">
    <property type="entry name" value="RNA_pol_Rpb1_4"/>
    <property type="match status" value="1"/>
</dbReference>
<dbReference type="Pfam" id="PF04998">
    <property type="entry name" value="RNA_pol_Rpb1_5"/>
    <property type="match status" value="1"/>
</dbReference>
<dbReference type="SMART" id="SM00663">
    <property type="entry name" value="RPOLA_N"/>
    <property type="match status" value="1"/>
</dbReference>
<dbReference type="SUPFAM" id="SSF64484">
    <property type="entry name" value="beta and beta-prime subunits of DNA dependent RNA-polymerase"/>
    <property type="match status" value="1"/>
</dbReference>
<protein>
    <recommendedName>
        <fullName evidence="1">DNA-directed RNA polymerase subunit beta'</fullName>
        <shortName evidence="1">RNAP subunit beta'</shortName>
        <ecNumber evidence="1">2.7.7.6</ecNumber>
    </recommendedName>
    <alternativeName>
        <fullName evidence="1">RNA polymerase subunit beta'</fullName>
    </alternativeName>
    <alternativeName>
        <fullName evidence="1">Transcriptase subunit beta'</fullName>
    </alternativeName>
</protein>
<gene>
    <name evidence="1" type="primary">rpoC</name>
    <name type="ordered locus">VC0395_A2731</name>
    <name type="ordered locus">VC395_0372</name>
</gene>
<keyword id="KW-0240">DNA-directed RNA polymerase</keyword>
<keyword id="KW-0460">Magnesium</keyword>
<keyword id="KW-0479">Metal-binding</keyword>
<keyword id="KW-0548">Nucleotidyltransferase</keyword>
<keyword id="KW-0804">Transcription</keyword>
<keyword id="KW-0808">Transferase</keyword>
<keyword id="KW-0862">Zinc</keyword>
<feature type="chain" id="PRO_0000353455" description="DNA-directed RNA polymerase subunit beta'">
    <location>
        <begin position="1"/>
        <end position="1401"/>
    </location>
</feature>
<feature type="region of interest" description="Disordered" evidence="2">
    <location>
        <begin position="1368"/>
        <end position="1387"/>
    </location>
</feature>
<feature type="compositionally biased region" description="Polar residues" evidence="2">
    <location>
        <begin position="1375"/>
        <end position="1386"/>
    </location>
</feature>
<feature type="binding site" evidence="1">
    <location>
        <position position="70"/>
    </location>
    <ligand>
        <name>Zn(2+)</name>
        <dbReference type="ChEBI" id="CHEBI:29105"/>
        <label>1</label>
    </ligand>
</feature>
<feature type="binding site" evidence="1">
    <location>
        <position position="72"/>
    </location>
    <ligand>
        <name>Zn(2+)</name>
        <dbReference type="ChEBI" id="CHEBI:29105"/>
        <label>1</label>
    </ligand>
</feature>
<feature type="binding site" evidence="1">
    <location>
        <position position="85"/>
    </location>
    <ligand>
        <name>Zn(2+)</name>
        <dbReference type="ChEBI" id="CHEBI:29105"/>
        <label>1</label>
    </ligand>
</feature>
<feature type="binding site" evidence="1">
    <location>
        <position position="88"/>
    </location>
    <ligand>
        <name>Zn(2+)</name>
        <dbReference type="ChEBI" id="CHEBI:29105"/>
        <label>1</label>
    </ligand>
</feature>
<feature type="binding site" evidence="1">
    <location>
        <position position="460"/>
    </location>
    <ligand>
        <name>Mg(2+)</name>
        <dbReference type="ChEBI" id="CHEBI:18420"/>
    </ligand>
</feature>
<feature type="binding site" evidence="1">
    <location>
        <position position="462"/>
    </location>
    <ligand>
        <name>Mg(2+)</name>
        <dbReference type="ChEBI" id="CHEBI:18420"/>
    </ligand>
</feature>
<feature type="binding site" evidence="1">
    <location>
        <position position="464"/>
    </location>
    <ligand>
        <name>Mg(2+)</name>
        <dbReference type="ChEBI" id="CHEBI:18420"/>
    </ligand>
</feature>
<feature type="binding site" evidence="1">
    <location>
        <position position="814"/>
    </location>
    <ligand>
        <name>Zn(2+)</name>
        <dbReference type="ChEBI" id="CHEBI:29105"/>
        <label>2</label>
    </ligand>
</feature>
<feature type="binding site" evidence="1">
    <location>
        <position position="888"/>
    </location>
    <ligand>
        <name>Zn(2+)</name>
        <dbReference type="ChEBI" id="CHEBI:29105"/>
        <label>2</label>
    </ligand>
</feature>
<feature type="binding site" evidence="1">
    <location>
        <position position="895"/>
    </location>
    <ligand>
        <name>Zn(2+)</name>
        <dbReference type="ChEBI" id="CHEBI:29105"/>
        <label>2</label>
    </ligand>
</feature>
<feature type="binding site" evidence="1">
    <location>
        <position position="898"/>
    </location>
    <ligand>
        <name>Zn(2+)</name>
        <dbReference type="ChEBI" id="CHEBI:29105"/>
        <label>2</label>
    </ligand>
</feature>
<accession>A5F3P6</accession>
<accession>C3M3Y7</accession>
<sequence>MKDLLNFLKAQHKTEEFDAIKIGLASPDMIRSWSFGEVKKPETINYRTFKPERDGLFCARIFGPVKDYECLCGKYKRLKHRGVICEKCGVEVTQTKVRRDRMGHIELASPVAHIWFLKSLPSRIGLLMDMPLRDIERVLYFEMYVVTEPGMTDLERGQMLTEEEYLDRLEEWGDEFTAKMGAEAIKDLLASMDLPAEAEQMREELDTTNSETKRKKLTKRLKLVEAFVASGNKPEWMILTVLPVLPPDLRPLVPLDGGRFATSDLNDLYRRVINRNNRLKRLLELAAPDIIVRNEKRMLQESVDALLDNGRRGRAITGSNKRPLKSLADMIKGKQGRFRQNLLGKRVDYSGRSVITVGPYLRLHQCGLPKKMALELFKPFIYSKLETRGLATTIKAAKKMVEREEAVVWDILDEVIREHPVLLNRAPTLHRLGIQAFEPVLIEGKAIQLHPLVCAAYNADFDGDQMAVHVPLTLEAQLEARTLMMSTNNILSPASGDPIIVPSQDVVLGLYYMTREKINAKGEGMYLTGPAEAEKAYRTKTAELHARVKVRITETIKHENGKLTTETKMIDTTVGRAMLWQIVPKGLPYSLVNQKLGKKQISNLLNEAYRKLGLKDTVIFADQIMYTGFAYAALSGVSVGIDDMVVPAAKYTEIAEAEEEVREIQEQFQSGLVTAGERYNKVIDIWASTNDRVAKAMMENLSSEQVINRQGEQEKQESFNSIYMMADSGARGSAAQIRQLAGMRGLMARPDGSIIETPITANFKEGLNVLQYFISTHGARKGLADTALKTANSGYLTRRLVDVAQDVVVTEHDCGTLEGVVMTPHIEGGDVKVALTELALGRVVSEDILKPGTDEVLIPRNTLLDEKWCKVINDNSVDQIKVRSVVTCDSDFGCCAQCYGRDLARGHLVNQGEAVGVIAAQSIGEPGTQLTMRTFHIGGAASTAAAENSIQAKNNGSVKLHNAKFVTNKDGKLVITSRASELTIIDEFGRTKEKHKLPYGSMLSKADGDAVAAGETVANWEAHTMPIITEVAGRVQFVDMIDGVTVSRQTDDLTGLSSSEVTEAAARPAAGKDMRPAIKLVDANGKDVLIPGTDMPAQYFLPGKAIVNLDDGAEVNVGDTLARIPQKSGGNKDITGGLPRVADLFEARKPKEPAILAEHSGTVSFGKETKGKRRLIITRDSGDTYEEMIPKHRQLNVFEGERIERGDVIADGPESPHDILRLRGIHAVTTYIANEVQEVYRLQGVKINDKHIETIVRQMLRKCTITFAGDSEFLPGETVEYSQVKIANRKLVEEGKEPARFERELLGITKASLATESFISAASFQETTRVLTEAAVSGKRDDLRGLKENVIVGRLIPAGTGFAYHQDRQAKRAQEQQGPSAEQATDNLAALLNAGFSSDDE</sequence>
<reference key="1">
    <citation type="submission" date="2007-03" db="EMBL/GenBank/DDBJ databases">
        <authorList>
            <person name="Heidelberg J."/>
        </authorList>
    </citation>
    <scope>NUCLEOTIDE SEQUENCE [LARGE SCALE GENOMIC DNA]</scope>
    <source>
        <strain>ATCC 39541 / Classical Ogawa 395 / O395</strain>
    </source>
</reference>
<reference key="2">
    <citation type="journal article" date="2008" name="PLoS ONE">
        <title>A recalibrated molecular clock and independent origins for the cholera pandemic clones.</title>
        <authorList>
            <person name="Feng L."/>
            <person name="Reeves P.R."/>
            <person name="Lan R."/>
            <person name="Ren Y."/>
            <person name="Gao C."/>
            <person name="Zhou Z."/>
            <person name="Ren Y."/>
            <person name="Cheng J."/>
            <person name="Wang W."/>
            <person name="Wang J."/>
            <person name="Qian W."/>
            <person name="Li D."/>
            <person name="Wang L."/>
        </authorList>
    </citation>
    <scope>NUCLEOTIDE SEQUENCE [LARGE SCALE GENOMIC DNA]</scope>
    <source>
        <strain>ATCC 39541 / Classical Ogawa 395 / O395</strain>
    </source>
</reference>
<evidence type="ECO:0000255" key="1">
    <source>
        <dbReference type="HAMAP-Rule" id="MF_01322"/>
    </source>
</evidence>
<evidence type="ECO:0000256" key="2">
    <source>
        <dbReference type="SAM" id="MobiDB-lite"/>
    </source>
</evidence>